<sequence>MTKVGIVGSTGRMGAHLIKNVLEEEGLELAALHVFDELTVDVPDEVLITNSMSEVLKACDVVIDFSAPVATQELCEEALKNPTALVIATTGFTAHQQNLLTEAAKEMPVLYSSNMSAGIALLKQLVEQVSATLKDFDIEIVEQHHRHKVDAPSGTALTLGEFAAKGRGLDLDDVRVSGRDGQIGARTKDEIAVMALRGGDIVGRHTVGFYNDGEFLELNHTATSRETFSKGAIRAAKWLVDQKNGLYSINDCLGI</sequence>
<gene>
    <name evidence="1" type="primary">dapB</name>
    <name type="ordered locus">SUN_0235</name>
</gene>
<dbReference type="EC" id="1.17.1.8" evidence="1"/>
<dbReference type="EMBL" id="AP009179">
    <property type="protein sequence ID" value="BAF71195.1"/>
    <property type="molecule type" value="Genomic_DNA"/>
</dbReference>
<dbReference type="RefSeq" id="WP_011979928.1">
    <property type="nucleotide sequence ID" value="NC_009663.1"/>
</dbReference>
<dbReference type="SMR" id="A6Q6T6"/>
<dbReference type="STRING" id="387093.SUN_0235"/>
<dbReference type="KEGG" id="sun:SUN_0235"/>
<dbReference type="eggNOG" id="COG0289">
    <property type="taxonomic scope" value="Bacteria"/>
</dbReference>
<dbReference type="HOGENOM" id="CLU_047479_2_1_7"/>
<dbReference type="OrthoDB" id="9790352at2"/>
<dbReference type="UniPathway" id="UPA00034">
    <property type="reaction ID" value="UER00018"/>
</dbReference>
<dbReference type="Proteomes" id="UP000006378">
    <property type="component" value="Chromosome"/>
</dbReference>
<dbReference type="GO" id="GO:0005829">
    <property type="term" value="C:cytosol"/>
    <property type="evidence" value="ECO:0007669"/>
    <property type="project" value="TreeGrafter"/>
</dbReference>
<dbReference type="GO" id="GO:0008839">
    <property type="term" value="F:4-hydroxy-tetrahydrodipicolinate reductase"/>
    <property type="evidence" value="ECO:0007669"/>
    <property type="project" value="UniProtKB-EC"/>
</dbReference>
<dbReference type="GO" id="GO:0051287">
    <property type="term" value="F:NAD binding"/>
    <property type="evidence" value="ECO:0007669"/>
    <property type="project" value="UniProtKB-UniRule"/>
</dbReference>
<dbReference type="GO" id="GO:0050661">
    <property type="term" value="F:NADP binding"/>
    <property type="evidence" value="ECO:0007669"/>
    <property type="project" value="UniProtKB-UniRule"/>
</dbReference>
<dbReference type="GO" id="GO:0016726">
    <property type="term" value="F:oxidoreductase activity, acting on CH or CH2 groups, NAD or NADP as acceptor"/>
    <property type="evidence" value="ECO:0007669"/>
    <property type="project" value="UniProtKB-UniRule"/>
</dbReference>
<dbReference type="GO" id="GO:0019877">
    <property type="term" value="P:diaminopimelate biosynthetic process"/>
    <property type="evidence" value="ECO:0007669"/>
    <property type="project" value="UniProtKB-UniRule"/>
</dbReference>
<dbReference type="GO" id="GO:0009089">
    <property type="term" value="P:lysine biosynthetic process via diaminopimelate"/>
    <property type="evidence" value="ECO:0007669"/>
    <property type="project" value="UniProtKB-UniRule"/>
</dbReference>
<dbReference type="CDD" id="cd02274">
    <property type="entry name" value="DHDPR_N"/>
    <property type="match status" value="1"/>
</dbReference>
<dbReference type="FunFam" id="3.30.360.10:FF:000004">
    <property type="entry name" value="4-hydroxy-tetrahydrodipicolinate reductase"/>
    <property type="match status" value="1"/>
</dbReference>
<dbReference type="Gene3D" id="3.30.360.10">
    <property type="entry name" value="Dihydrodipicolinate Reductase, domain 2"/>
    <property type="match status" value="1"/>
</dbReference>
<dbReference type="Gene3D" id="3.40.50.720">
    <property type="entry name" value="NAD(P)-binding Rossmann-like Domain"/>
    <property type="match status" value="1"/>
</dbReference>
<dbReference type="HAMAP" id="MF_00102">
    <property type="entry name" value="DapB"/>
    <property type="match status" value="1"/>
</dbReference>
<dbReference type="InterPro" id="IPR022663">
    <property type="entry name" value="DapB_C"/>
</dbReference>
<dbReference type="InterPro" id="IPR000846">
    <property type="entry name" value="DapB_N"/>
</dbReference>
<dbReference type="InterPro" id="IPR022664">
    <property type="entry name" value="DapB_N_CS"/>
</dbReference>
<dbReference type="InterPro" id="IPR023940">
    <property type="entry name" value="DHDPR_bac"/>
</dbReference>
<dbReference type="InterPro" id="IPR036291">
    <property type="entry name" value="NAD(P)-bd_dom_sf"/>
</dbReference>
<dbReference type="NCBIfam" id="TIGR00036">
    <property type="entry name" value="dapB"/>
    <property type="match status" value="1"/>
</dbReference>
<dbReference type="PANTHER" id="PTHR20836:SF0">
    <property type="entry name" value="4-HYDROXY-TETRAHYDRODIPICOLINATE REDUCTASE 1, CHLOROPLASTIC-RELATED"/>
    <property type="match status" value="1"/>
</dbReference>
<dbReference type="PANTHER" id="PTHR20836">
    <property type="entry name" value="DIHYDRODIPICOLINATE REDUCTASE"/>
    <property type="match status" value="1"/>
</dbReference>
<dbReference type="Pfam" id="PF05173">
    <property type="entry name" value="DapB_C"/>
    <property type="match status" value="1"/>
</dbReference>
<dbReference type="Pfam" id="PF01113">
    <property type="entry name" value="DapB_N"/>
    <property type="match status" value="1"/>
</dbReference>
<dbReference type="PIRSF" id="PIRSF000161">
    <property type="entry name" value="DHPR"/>
    <property type="match status" value="1"/>
</dbReference>
<dbReference type="SUPFAM" id="SSF55347">
    <property type="entry name" value="Glyceraldehyde-3-phosphate dehydrogenase-like, C-terminal domain"/>
    <property type="match status" value="1"/>
</dbReference>
<dbReference type="SUPFAM" id="SSF51735">
    <property type="entry name" value="NAD(P)-binding Rossmann-fold domains"/>
    <property type="match status" value="1"/>
</dbReference>
<dbReference type="PROSITE" id="PS01298">
    <property type="entry name" value="DAPB"/>
    <property type="match status" value="1"/>
</dbReference>
<feature type="chain" id="PRO_1000008650" description="4-hydroxy-tetrahydrodipicolinate reductase">
    <location>
        <begin position="1"/>
        <end position="255"/>
    </location>
</feature>
<feature type="active site" description="Proton donor/acceptor" evidence="1">
    <location>
        <position position="144"/>
    </location>
</feature>
<feature type="active site" description="Proton donor" evidence="1">
    <location>
        <position position="148"/>
    </location>
</feature>
<feature type="binding site" evidence="1">
    <location>
        <begin position="8"/>
        <end position="13"/>
    </location>
    <ligand>
        <name>NAD(+)</name>
        <dbReference type="ChEBI" id="CHEBI:57540"/>
    </ligand>
</feature>
<feature type="binding site" evidence="1">
    <location>
        <begin position="88"/>
        <end position="90"/>
    </location>
    <ligand>
        <name>NAD(+)</name>
        <dbReference type="ChEBI" id="CHEBI:57540"/>
    </ligand>
</feature>
<feature type="binding site" evidence="1">
    <location>
        <begin position="112"/>
        <end position="115"/>
    </location>
    <ligand>
        <name>NAD(+)</name>
        <dbReference type="ChEBI" id="CHEBI:57540"/>
    </ligand>
</feature>
<feature type="binding site" evidence="1">
    <location>
        <position position="145"/>
    </location>
    <ligand>
        <name>(S)-2,3,4,5-tetrahydrodipicolinate</name>
        <dbReference type="ChEBI" id="CHEBI:16845"/>
    </ligand>
</feature>
<feature type="binding site" evidence="1">
    <location>
        <begin position="154"/>
        <end position="155"/>
    </location>
    <ligand>
        <name>(S)-2,3,4,5-tetrahydrodipicolinate</name>
        <dbReference type="ChEBI" id="CHEBI:16845"/>
    </ligand>
</feature>
<protein>
    <recommendedName>
        <fullName evidence="1">4-hydroxy-tetrahydrodipicolinate reductase</fullName>
        <shortName evidence="1">HTPA reductase</shortName>
        <ecNumber evidence="1">1.17.1.8</ecNumber>
    </recommendedName>
</protein>
<name>DAPB_SULNB</name>
<comment type="function">
    <text evidence="1">Catalyzes the conversion of 4-hydroxy-tetrahydrodipicolinate (HTPA) to tetrahydrodipicolinate.</text>
</comment>
<comment type="catalytic activity">
    <reaction evidence="1">
        <text>(S)-2,3,4,5-tetrahydrodipicolinate + NAD(+) + H2O = (2S,4S)-4-hydroxy-2,3,4,5-tetrahydrodipicolinate + NADH + H(+)</text>
        <dbReference type="Rhea" id="RHEA:35323"/>
        <dbReference type="ChEBI" id="CHEBI:15377"/>
        <dbReference type="ChEBI" id="CHEBI:15378"/>
        <dbReference type="ChEBI" id="CHEBI:16845"/>
        <dbReference type="ChEBI" id="CHEBI:57540"/>
        <dbReference type="ChEBI" id="CHEBI:57945"/>
        <dbReference type="ChEBI" id="CHEBI:67139"/>
        <dbReference type="EC" id="1.17.1.8"/>
    </reaction>
</comment>
<comment type="catalytic activity">
    <reaction evidence="1">
        <text>(S)-2,3,4,5-tetrahydrodipicolinate + NADP(+) + H2O = (2S,4S)-4-hydroxy-2,3,4,5-tetrahydrodipicolinate + NADPH + H(+)</text>
        <dbReference type="Rhea" id="RHEA:35331"/>
        <dbReference type="ChEBI" id="CHEBI:15377"/>
        <dbReference type="ChEBI" id="CHEBI:15378"/>
        <dbReference type="ChEBI" id="CHEBI:16845"/>
        <dbReference type="ChEBI" id="CHEBI:57783"/>
        <dbReference type="ChEBI" id="CHEBI:58349"/>
        <dbReference type="ChEBI" id="CHEBI:67139"/>
        <dbReference type="EC" id="1.17.1.8"/>
    </reaction>
</comment>
<comment type="pathway">
    <text evidence="1">Amino-acid biosynthesis; L-lysine biosynthesis via DAP pathway; (S)-tetrahydrodipicolinate from L-aspartate: step 4/4.</text>
</comment>
<comment type="subcellular location">
    <subcellularLocation>
        <location evidence="1">Cytoplasm</location>
    </subcellularLocation>
</comment>
<comment type="similarity">
    <text evidence="1">Belongs to the DapB family.</text>
</comment>
<comment type="caution">
    <text evidence="2">Was originally thought to be a dihydrodipicolinate reductase (DHDPR), catalyzing the conversion of dihydrodipicolinate to tetrahydrodipicolinate. However, it was shown in E.coli that the substrate of the enzymatic reaction is not dihydrodipicolinate (DHDP) but in fact (2S,4S)-4-hydroxy-2,3,4,5-tetrahydrodipicolinic acid (HTPA), the product released by the DapA-catalyzed reaction.</text>
</comment>
<evidence type="ECO:0000255" key="1">
    <source>
        <dbReference type="HAMAP-Rule" id="MF_00102"/>
    </source>
</evidence>
<evidence type="ECO:0000305" key="2"/>
<keyword id="KW-0028">Amino-acid biosynthesis</keyword>
<keyword id="KW-0963">Cytoplasm</keyword>
<keyword id="KW-0220">Diaminopimelate biosynthesis</keyword>
<keyword id="KW-0457">Lysine biosynthesis</keyword>
<keyword id="KW-0520">NAD</keyword>
<keyword id="KW-0521">NADP</keyword>
<keyword id="KW-0560">Oxidoreductase</keyword>
<proteinExistence type="inferred from homology"/>
<organism>
    <name type="scientific">Sulfurovum sp. (strain NBC37-1)</name>
    <dbReference type="NCBI Taxonomy" id="387093"/>
    <lineage>
        <taxon>Bacteria</taxon>
        <taxon>Pseudomonadati</taxon>
        <taxon>Campylobacterota</taxon>
        <taxon>Epsilonproteobacteria</taxon>
        <taxon>Campylobacterales</taxon>
        <taxon>Sulfurovaceae</taxon>
        <taxon>Sulfurovum</taxon>
    </lineage>
</organism>
<reference key="1">
    <citation type="journal article" date="2007" name="Proc. Natl. Acad. Sci. U.S.A.">
        <title>Deep-sea vent epsilon-proteobacterial genomes provide insights into emergence of pathogens.</title>
        <authorList>
            <person name="Nakagawa S."/>
            <person name="Takaki Y."/>
            <person name="Shimamura S."/>
            <person name="Reysenbach A.-L."/>
            <person name="Takai K."/>
            <person name="Horikoshi K."/>
        </authorList>
    </citation>
    <scope>NUCLEOTIDE SEQUENCE [LARGE SCALE GENOMIC DNA]</scope>
    <source>
        <strain>NBC37-1</strain>
    </source>
</reference>
<accession>A6Q6T6</accession>